<organism>
    <name type="scientific">Albidiferax ferrireducens (strain ATCC BAA-621 / DSM 15236 / T118)</name>
    <name type="common">Rhodoferax ferrireducens</name>
    <dbReference type="NCBI Taxonomy" id="338969"/>
    <lineage>
        <taxon>Bacteria</taxon>
        <taxon>Pseudomonadati</taxon>
        <taxon>Pseudomonadota</taxon>
        <taxon>Betaproteobacteria</taxon>
        <taxon>Burkholderiales</taxon>
        <taxon>Comamonadaceae</taxon>
        <taxon>Rhodoferax</taxon>
    </lineage>
</organism>
<dbReference type="EC" id="4.1.1.65" evidence="1"/>
<dbReference type="EMBL" id="CP000267">
    <property type="protein sequence ID" value="ABD68358.1"/>
    <property type="status" value="ALT_INIT"/>
    <property type="molecule type" value="Genomic_DNA"/>
</dbReference>
<dbReference type="RefSeq" id="WP_041790083.1">
    <property type="nucleotide sequence ID" value="NC_007908.1"/>
</dbReference>
<dbReference type="SMR" id="Q221E5"/>
<dbReference type="STRING" id="338969.Rfer_0607"/>
<dbReference type="KEGG" id="rfr:Rfer_0607"/>
<dbReference type="eggNOG" id="COG0688">
    <property type="taxonomic scope" value="Bacteria"/>
</dbReference>
<dbReference type="HOGENOM" id="CLU_029061_4_1_4"/>
<dbReference type="OrthoDB" id="9802030at2"/>
<dbReference type="UniPathway" id="UPA00558">
    <property type="reaction ID" value="UER00616"/>
</dbReference>
<dbReference type="Proteomes" id="UP000008332">
    <property type="component" value="Chromosome"/>
</dbReference>
<dbReference type="GO" id="GO:0005886">
    <property type="term" value="C:plasma membrane"/>
    <property type="evidence" value="ECO:0007669"/>
    <property type="project" value="UniProtKB-SubCell"/>
</dbReference>
<dbReference type="GO" id="GO:0004609">
    <property type="term" value="F:phosphatidylserine decarboxylase activity"/>
    <property type="evidence" value="ECO:0007669"/>
    <property type="project" value="UniProtKB-UniRule"/>
</dbReference>
<dbReference type="GO" id="GO:0006646">
    <property type="term" value="P:phosphatidylethanolamine biosynthetic process"/>
    <property type="evidence" value="ECO:0007669"/>
    <property type="project" value="UniProtKB-UniRule"/>
</dbReference>
<dbReference type="HAMAP" id="MF_00662">
    <property type="entry name" value="PS_decarb_PSD_B_type1"/>
    <property type="match status" value="1"/>
</dbReference>
<dbReference type="InterPro" id="IPR003817">
    <property type="entry name" value="PS_Dcarbxylase"/>
</dbReference>
<dbReference type="InterPro" id="IPR033177">
    <property type="entry name" value="PSD-B"/>
</dbReference>
<dbReference type="InterPro" id="IPR033178">
    <property type="entry name" value="PSD_type1_pro"/>
</dbReference>
<dbReference type="NCBIfam" id="TIGR00163">
    <property type="entry name" value="PS_decarb"/>
    <property type="match status" value="1"/>
</dbReference>
<dbReference type="PANTHER" id="PTHR10067">
    <property type="entry name" value="PHOSPHATIDYLSERINE DECARBOXYLASE"/>
    <property type="match status" value="1"/>
</dbReference>
<dbReference type="PANTHER" id="PTHR10067:SF6">
    <property type="entry name" value="PHOSPHATIDYLSERINE DECARBOXYLASE PROENZYME, MITOCHONDRIAL"/>
    <property type="match status" value="1"/>
</dbReference>
<dbReference type="Pfam" id="PF02666">
    <property type="entry name" value="PS_Dcarbxylase"/>
    <property type="match status" value="1"/>
</dbReference>
<proteinExistence type="inferred from homology"/>
<sequence>MFDRLAVLPQYLLPKQAITLLAGRVAGARGGKWTTRLIEWFVKRYKVNMREAANPEVASYATFNDFFTRALQAGARPLARADLICPVDGAISQFGAMAGQQIFQAKGHHYSSTALVGGDAALAAQFDDGHFATLYLSPRDYHRIHMPCDGVLRRMIYVPGALFSVNPTTALGVPGLFARNERVVCVFESARGPFVLVLVGATIVGSMATVWHGVVNPPRSTAVREWRYDEQPVRLKQGEEMGRFLLGSTVVMLFPKGPLQFNPAWSPGAAIRLGEAMARQPPLA</sequence>
<name>PSD_ALBFT</name>
<gene>
    <name evidence="1" type="primary">psd</name>
    <name type="ordered locus">Rfer_0607</name>
</gene>
<reference key="1">
    <citation type="submission" date="2006-02" db="EMBL/GenBank/DDBJ databases">
        <title>Complete sequence of chromosome of Rhodoferax ferrireducens DSM 15236.</title>
        <authorList>
            <person name="Copeland A."/>
            <person name="Lucas S."/>
            <person name="Lapidus A."/>
            <person name="Barry K."/>
            <person name="Detter J.C."/>
            <person name="Glavina del Rio T."/>
            <person name="Hammon N."/>
            <person name="Israni S."/>
            <person name="Pitluck S."/>
            <person name="Brettin T."/>
            <person name="Bruce D."/>
            <person name="Han C."/>
            <person name="Tapia R."/>
            <person name="Gilna P."/>
            <person name="Kiss H."/>
            <person name="Schmutz J."/>
            <person name="Larimer F."/>
            <person name="Land M."/>
            <person name="Kyrpides N."/>
            <person name="Ivanova N."/>
            <person name="Richardson P."/>
        </authorList>
    </citation>
    <scope>NUCLEOTIDE SEQUENCE [LARGE SCALE GENOMIC DNA]</scope>
    <source>
        <strain>ATCC BAA-621 / DSM 15236 / T118</strain>
    </source>
</reference>
<protein>
    <recommendedName>
        <fullName evidence="1">Phosphatidylserine decarboxylase proenzyme</fullName>
        <ecNumber evidence="1">4.1.1.65</ecNumber>
    </recommendedName>
    <component>
        <recommendedName>
            <fullName evidence="1">Phosphatidylserine decarboxylase alpha chain</fullName>
        </recommendedName>
    </component>
    <component>
        <recommendedName>
            <fullName evidence="1">Phosphatidylserine decarboxylase beta chain</fullName>
        </recommendedName>
    </component>
</protein>
<comment type="function">
    <text evidence="1">Catalyzes the formation of phosphatidylethanolamine (PtdEtn) from phosphatidylserine (PtdSer).</text>
</comment>
<comment type="catalytic activity">
    <reaction evidence="1">
        <text>a 1,2-diacyl-sn-glycero-3-phospho-L-serine + H(+) = a 1,2-diacyl-sn-glycero-3-phosphoethanolamine + CO2</text>
        <dbReference type="Rhea" id="RHEA:20828"/>
        <dbReference type="ChEBI" id="CHEBI:15378"/>
        <dbReference type="ChEBI" id="CHEBI:16526"/>
        <dbReference type="ChEBI" id="CHEBI:57262"/>
        <dbReference type="ChEBI" id="CHEBI:64612"/>
        <dbReference type="EC" id="4.1.1.65"/>
    </reaction>
</comment>
<comment type="cofactor">
    <cofactor evidence="1">
        <name>pyruvate</name>
        <dbReference type="ChEBI" id="CHEBI:15361"/>
    </cofactor>
    <text evidence="1">Binds 1 pyruvoyl group covalently per subunit.</text>
</comment>
<comment type="pathway">
    <text evidence="1">Phospholipid metabolism; phosphatidylethanolamine biosynthesis; phosphatidylethanolamine from CDP-diacylglycerol: step 2/2.</text>
</comment>
<comment type="subunit">
    <text evidence="1">Heterodimer of a large membrane-associated beta subunit and a small pyruvoyl-containing alpha subunit.</text>
</comment>
<comment type="subcellular location">
    <subcellularLocation>
        <location evidence="1">Cell membrane</location>
        <topology evidence="1">Peripheral membrane protein</topology>
    </subcellularLocation>
</comment>
<comment type="PTM">
    <text evidence="1">Is synthesized initially as an inactive proenzyme. Formation of the active enzyme involves a self-maturation process in which the active site pyruvoyl group is generated from an internal serine residue via an autocatalytic post-translational modification. Two non-identical subunits are generated from the proenzyme in this reaction, and the pyruvate is formed at the N-terminus of the alpha chain, which is derived from the carboxyl end of the proenzyme. The autoendoproteolytic cleavage occurs by a canonical serine protease mechanism, in which the side chain hydroxyl group of the serine supplies its oxygen atom to form the C-terminus of the beta chain, while the remainder of the serine residue undergoes an oxidative deamination to produce ammonia and the pyruvoyl prosthetic group on the alpha chain. During this reaction, the Ser that is part of the protease active site of the proenzyme becomes the pyruvoyl prosthetic group, which constitutes an essential element of the active site of the mature decarboxylase.</text>
</comment>
<comment type="similarity">
    <text evidence="1">Belongs to the phosphatidylserine decarboxylase family. PSD-B subfamily. Prokaryotic type I sub-subfamily.</text>
</comment>
<comment type="sequence caution" evidence="2">
    <conflict type="erroneous initiation">
        <sequence resource="EMBL-CDS" id="ABD68358"/>
    </conflict>
</comment>
<accession>Q221E5</accession>
<feature type="chain" id="PRO_0000262145" description="Phosphatidylserine decarboxylase beta chain" evidence="1">
    <location>
        <begin position="1"/>
        <end position="247"/>
    </location>
</feature>
<feature type="chain" id="PRO_0000262146" description="Phosphatidylserine decarboxylase alpha chain" evidence="1">
    <location>
        <begin position="248"/>
        <end position="284"/>
    </location>
</feature>
<feature type="active site" description="Charge relay system; for autoendoproteolytic cleavage activity" evidence="1">
    <location>
        <position position="88"/>
    </location>
</feature>
<feature type="active site" description="Charge relay system; for autoendoproteolytic cleavage activity" evidence="1">
    <location>
        <position position="145"/>
    </location>
</feature>
<feature type="active site" description="Charge relay system; for autoendoproteolytic cleavage activity" evidence="1">
    <location>
        <position position="248"/>
    </location>
</feature>
<feature type="active site" description="Schiff-base intermediate with substrate; via pyruvic acid; for decarboxylase activity" evidence="1">
    <location>
        <position position="248"/>
    </location>
</feature>
<feature type="site" description="Cleavage (non-hydrolytic); by autocatalysis" evidence="1">
    <location>
        <begin position="247"/>
        <end position="248"/>
    </location>
</feature>
<feature type="modified residue" description="Pyruvic acid (Ser); by autocatalysis" evidence="1">
    <location>
        <position position="248"/>
    </location>
</feature>
<keyword id="KW-1003">Cell membrane</keyword>
<keyword id="KW-0210">Decarboxylase</keyword>
<keyword id="KW-0444">Lipid biosynthesis</keyword>
<keyword id="KW-0443">Lipid metabolism</keyword>
<keyword id="KW-0456">Lyase</keyword>
<keyword id="KW-0472">Membrane</keyword>
<keyword id="KW-0594">Phospholipid biosynthesis</keyword>
<keyword id="KW-1208">Phospholipid metabolism</keyword>
<keyword id="KW-0670">Pyruvate</keyword>
<keyword id="KW-1185">Reference proteome</keyword>
<keyword id="KW-0865">Zymogen</keyword>
<evidence type="ECO:0000255" key="1">
    <source>
        <dbReference type="HAMAP-Rule" id="MF_00662"/>
    </source>
</evidence>
<evidence type="ECO:0000305" key="2"/>